<comment type="function">
    <text evidence="5 6">Transporter for myo-inositol.</text>
</comment>
<comment type="catalytic activity">
    <reaction evidence="9 10">
        <text>myo-inositol(out) + H(+)(out) = myo-inositol(in) + H(+)(in)</text>
        <dbReference type="Rhea" id="RHEA:60364"/>
        <dbReference type="ChEBI" id="CHEBI:15378"/>
        <dbReference type="ChEBI" id="CHEBI:17268"/>
    </reaction>
</comment>
<comment type="subcellular location">
    <subcellularLocation>
        <location evidence="1">Cell membrane</location>
        <topology evidence="2">Multi-pass membrane protein</topology>
    </subcellularLocation>
</comment>
<comment type="induction">
    <text evidence="6">Expressed during infection.</text>
</comment>
<comment type="similarity">
    <text evidence="8">Belongs to the major facilitator superfamily. Sugar transporter (TC 2.A.1.1) family.</text>
</comment>
<dbReference type="EMBL" id="CP003824">
    <property type="protein sequence ID" value="AFR95263.2"/>
    <property type="molecule type" value="Genomic_DNA"/>
</dbReference>
<dbReference type="EMBL" id="CP003824">
    <property type="protein sequence ID" value="AGV14380.1"/>
    <property type="molecule type" value="Genomic_DNA"/>
</dbReference>
<dbReference type="RefSeq" id="XP_012049146.1">
    <property type="nucleotide sequence ID" value="XM_012193756.1"/>
</dbReference>
<dbReference type="RefSeq" id="XP_012049157.1">
    <property type="nucleotide sequence ID" value="XM_012193767.1"/>
</dbReference>
<dbReference type="SMR" id="J9VLY3"/>
<dbReference type="GeneID" id="23884641"/>
<dbReference type="KEGG" id="cng:CNAG_00867"/>
<dbReference type="VEuPathDB" id="FungiDB:CNAG_00867"/>
<dbReference type="OrthoDB" id="6461at5206"/>
<dbReference type="Proteomes" id="UP000010091">
    <property type="component" value="Chromosome 5"/>
</dbReference>
<dbReference type="GO" id="GO:0005886">
    <property type="term" value="C:plasma membrane"/>
    <property type="evidence" value="ECO:0007669"/>
    <property type="project" value="UniProtKB-SubCell"/>
</dbReference>
<dbReference type="GO" id="GO:0005365">
    <property type="term" value="F:myo-inositol transmembrane transporter activity"/>
    <property type="evidence" value="ECO:0000316"/>
    <property type="project" value="UniProtKB"/>
</dbReference>
<dbReference type="GO" id="GO:1904679">
    <property type="term" value="P:myo-inositol import across plasma membrane"/>
    <property type="evidence" value="ECO:0000316"/>
    <property type="project" value="UniProtKB"/>
</dbReference>
<dbReference type="FunFam" id="1.20.1250.20:FF:000073">
    <property type="entry name" value="MFS myo-inositol transporter, putative"/>
    <property type="match status" value="1"/>
</dbReference>
<dbReference type="Gene3D" id="1.20.1250.20">
    <property type="entry name" value="MFS general substrate transporter like domains"/>
    <property type="match status" value="1"/>
</dbReference>
<dbReference type="InterPro" id="IPR020846">
    <property type="entry name" value="MFS_dom"/>
</dbReference>
<dbReference type="InterPro" id="IPR005828">
    <property type="entry name" value="MFS_sugar_transport-like"/>
</dbReference>
<dbReference type="InterPro" id="IPR036259">
    <property type="entry name" value="MFS_trans_sf"/>
</dbReference>
<dbReference type="InterPro" id="IPR050814">
    <property type="entry name" value="Myo-inositol_Transporter"/>
</dbReference>
<dbReference type="InterPro" id="IPR003663">
    <property type="entry name" value="Sugar/inositol_transpt"/>
</dbReference>
<dbReference type="InterPro" id="IPR005829">
    <property type="entry name" value="Sugar_transporter_CS"/>
</dbReference>
<dbReference type="NCBIfam" id="TIGR00879">
    <property type="entry name" value="SP"/>
    <property type="match status" value="1"/>
</dbReference>
<dbReference type="PANTHER" id="PTHR48020">
    <property type="entry name" value="PROTON MYO-INOSITOL COTRANSPORTER"/>
    <property type="match status" value="1"/>
</dbReference>
<dbReference type="PANTHER" id="PTHR48020:SF12">
    <property type="entry name" value="PROTON MYO-INOSITOL COTRANSPORTER"/>
    <property type="match status" value="1"/>
</dbReference>
<dbReference type="Pfam" id="PF00083">
    <property type="entry name" value="Sugar_tr"/>
    <property type="match status" value="1"/>
</dbReference>
<dbReference type="PRINTS" id="PR00171">
    <property type="entry name" value="SUGRTRNSPORT"/>
</dbReference>
<dbReference type="SUPFAM" id="SSF103473">
    <property type="entry name" value="MFS general substrate transporter"/>
    <property type="match status" value="1"/>
</dbReference>
<dbReference type="PROSITE" id="PS50850">
    <property type="entry name" value="MFS"/>
    <property type="match status" value="1"/>
</dbReference>
<dbReference type="PROSITE" id="PS00217">
    <property type="entry name" value="SUGAR_TRANSPORT_2"/>
    <property type="match status" value="1"/>
</dbReference>
<gene>
    <name type="primary">ITR3A</name>
    <name evidence="11" type="ORF">CNAG_00867</name>
</gene>
<accession>J9VLY3</accession>
<name>ITR3A_CRYNH</name>
<proteinExistence type="evidence at protein level"/>
<reference evidence="12" key="1">
    <citation type="journal article" date="2014" name="PLoS Genet.">
        <title>Analysis of the genome and transcriptome of Cryptococcus neoformans var. grubii reveals complex RNA expression and microevolution leading to virulence attenuation.</title>
        <authorList>
            <person name="Janbon G."/>
            <person name="Ormerod K.L."/>
            <person name="Paulet D."/>
            <person name="Byrnes E.J. III"/>
            <person name="Yadav V."/>
            <person name="Chatterjee G."/>
            <person name="Mullapudi N."/>
            <person name="Hon C.-C."/>
            <person name="Billmyre R.B."/>
            <person name="Brunel F."/>
            <person name="Bahn Y.-S."/>
            <person name="Chen W."/>
            <person name="Chen Y."/>
            <person name="Chow E.W.L."/>
            <person name="Coppee J.-Y."/>
            <person name="Floyd-Averette A."/>
            <person name="Gaillardin C."/>
            <person name="Gerik K.J."/>
            <person name="Goldberg J."/>
            <person name="Gonzalez-Hilarion S."/>
            <person name="Gujja S."/>
            <person name="Hamlin J.L."/>
            <person name="Hsueh Y.-P."/>
            <person name="Ianiri G."/>
            <person name="Jones S."/>
            <person name="Kodira C.D."/>
            <person name="Kozubowski L."/>
            <person name="Lam W."/>
            <person name="Marra M."/>
            <person name="Mesner L.D."/>
            <person name="Mieczkowski P.A."/>
            <person name="Moyrand F."/>
            <person name="Nielsen K."/>
            <person name="Proux C."/>
            <person name="Rossignol T."/>
            <person name="Schein J.E."/>
            <person name="Sun S."/>
            <person name="Wollschlaeger C."/>
            <person name="Wood I.A."/>
            <person name="Zeng Q."/>
            <person name="Neuveglise C."/>
            <person name="Newlon C.S."/>
            <person name="Perfect J.R."/>
            <person name="Lodge J.K."/>
            <person name="Idnurm A."/>
            <person name="Stajich J.E."/>
            <person name="Kronstad J.W."/>
            <person name="Sanyal K."/>
            <person name="Heitman J."/>
            <person name="Fraser J.A."/>
            <person name="Cuomo C.A."/>
            <person name="Dietrich F.S."/>
        </authorList>
    </citation>
    <scope>NUCLEOTIDE SEQUENCE [LARGE SCALE GENOMIC DNA]</scope>
    <source>
        <strain>H99 / ATCC 208821 / CBS 10515 / FGSC 9487</strain>
    </source>
</reference>
<reference evidence="8" key="2">
    <citation type="journal article" date="2010" name="MBio">
        <title>Role of an expanded inositol transporter repertoire in Cryptococcus neoformans sexual reproduction and virulence.</title>
        <authorList>
            <person name="Xue C."/>
            <person name="Liu T."/>
            <person name="Chen L."/>
            <person name="Li W."/>
            <person name="Liu I."/>
            <person name="Kronstad J.W."/>
            <person name="Seyfang A."/>
            <person name="Heitman J."/>
        </authorList>
    </citation>
    <scope>FUNCTION</scope>
    <scope>CATALYTIC ACTIVITY</scope>
</reference>
<reference evidence="8" key="3">
    <citation type="journal article" date="2011" name="Eukaryot. Cell">
        <title>Two major inositol transporters and their role in cryptococcal virulence.</title>
        <authorList>
            <person name="Wang Y."/>
            <person name="Liu T.B."/>
            <person name="Delmas G."/>
            <person name="Park S."/>
            <person name="Perlin D."/>
            <person name="Xue C."/>
        </authorList>
    </citation>
    <scope>FUNCTION</scope>
    <scope>CATALYTIC ACTIVITY</scope>
    <scope>INDUCTION</scope>
</reference>
<feature type="chain" id="PRO_0000456782" description="Myo-inositol transporter 3A">
    <location>
        <begin position="1"/>
        <end position="590"/>
    </location>
</feature>
<feature type="topological domain" description="Cytoplasmic" evidence="8">
    <location>
        <begin position="1"/>
        <end position="57"/>
    </location>
</feature>
<feature type="transmembrane region" description="Helical; Name=1" evidence="2">
    <location>
        <begin position="58"/>
        <end position="78"/>
    </location>
</feature>
<feature type="topological domain" description="Extracellular" evidence="8">
    <location>
        <begin position="79"/>
        <end position="105"/>
    </location>
</feature>
<feature type="transmembrane region" description="Helical; Name=2" evidence="2">
    <location>
        <begin position="106"/>
        <end position="126"/>
    </location>
</feature>
<feature type="topological domain" description="Cytoplasmic" evidence="8">
    <location>
        <begin position="127"/>
        <end position="132"/>
    </location>
</feature>
<feature type="transmembrane region" description="Helical; Name=3" evidence="2">
    <location>
        <begin position="133"/>
        <end position="153"/>
    </location>
</feature>
<feature type="topological domain" description="Extracellular" evidence="8">
    <location>
        <begin position="154"/>
        <end position="157"/>
    </location>
</feature>
<feature type="transmembrane region" description="Helical; Name=4" evidence="2">
    <location>
        <begin position="158"/>
        <end position="178"/>
    </location>
</feature>
<feature type="topological domain" description="Cytoplasmic" evidence="8">
    <location>
        <begin position="179"/>
        <end position="192"/>
    </location>
</feature>
<feature type="transmembrane region" description="Helical; Name=5" evidence="2">
    <location>
        <begin position="193"/>
        <end position="213"/>
    </location>
</feature>
<feature type="topological domain" description="Extracellular" evidence="8">
    <location>
        <begin position="214"/>
        <end position="222"/>
    </location>
</feature>
<feature type="transmembrane region" description="Helical; Name=6" evidence="2">
    <location>
        <begin position="223"/>
        <end position="243"/>
    </location>
</feature>
<feature type="topological domain" description="Cytoplasmic" evidence="8">
    <location>
        <begin position="244"/>
        <end position="325"/>
    </location>
</feature>
<feature type="transmembrane region" description="Helical; Name=7" evidence="2">
    <location>
        <begin position="326"/>
        <end position="346"/>
    </location>
</feature>
<feature type="topological domain" description="Extracellular" evidence="8">
    <location>
        <begin position="347"/>
        <end position="349"/>
    </location>
</feature>
<feature type="transmembrane region" description="Helical; Name=8" evidence="2">
    <location>
        <begin position="350"/>
        <end position="370"/>
    </location>
</feature>
<feature type="topological domain" description="Cytoplasmic" evidence="8">
    <location>
        <begin position="371"/>
        <end position="376"/>
    </location>
</feature>
<feature type="transmembrane region" description="Helical; Name=9" evidence="2">
    <location>
        <begin position="377"/>
        <end position="397"/>
    </location>
</feature>
<feature type="topological domain" description="Extracellular" evidence="8">
    <location>
        <begin position="398"/>
        <end position="420"/>
    </location>
</feature>
<feature type="transmembrane region" description="Helical; Name=10" evidence="2">
    <location>
        <begin position="421"/>
        <end position="441"/>
    </location>
</feature>
<feature type="topological domain" description="Cytoplasmic" evidence="8">
    <location>
        <begin position="442"/>
        <end position="455"/>
    </location>
</feature>
<feature type="transmembrane region" description="Helical; Name=11" evidence="2">
    <location>
        <begin position="456"/>
        <end position="476"/>
    </location>
</feature>
<feature type="topological domain" description="Extracellular" evidence="8">
    <location>
        <begin position="477"/>
        <end position="485"/>
    </location>
</feature>
<feature type="transmembrane region" description="Helical; Name=12" evidence="2">
    <location>
        <begin position="486"/>
        <end position="506"/>
    </location>
</feature>
<feature type="topological domain" description="Cytoplasmic" evidence="8">
    <location>
        <begin position="507"/>
        <end position="590"/>
    </location>
</feature>
<feature type="region of interest" description="Disordered" evidence="4">
    <location>
        <begin position="15"/>
        <end position="40"/>
    </location>
</feature>
<feature type="compositionally biased region" description="Basic and acidic residues" evidence="4">
    <location>
        <begin position="15"/>
        <end position="24"/>
    </location>
</feature>
<feature type="glycosylation site" description="N-linked (GlcNAc...) asparagine" evidence="3">
    <location>
        <position position="100"/>
    </location>
</feature>
<organism evidence="12">
    <name type="scientific">Cryptococcus neoformans var. grubii serotype A (strain H99 / ATCC 208821 / CBS 10515 / FGSC 9487)</name>
    <name type="common">Filobasidiella neoformans var. grubii</name>
    <dbReference type="NCBI Taxonomy" id="235443"/>
    <lineage>
        <taxon>Eukaryota</taxon>
        <taxon>Fungi</taxon>
        <taxon>Dikarya</taxon>
        <taxon>Basidiomycota</taxon>
        <taxon>Agaricomycotina</taxon>
        <taxon>Tremellomycetes</taxon>
        <taxon>Tremellales</taxon>
        <taxon>Cryptococcaceae</taxon>
        <taxon>Cryptococcus</taxon>
        <taxon>Cryptococcus neoformans species complex</taxon>
    </lineage>
</organism>
<sequence>MSATHIENRDDSFLENKGIDHIGRPENNNGSQEPPSPSGFGGHLIDENLVRVEGEDKVTWYLCFLISASAIAGFLFGYDTGVVGVALPLVGTDLGGSALNSSQQEIITAGTTIGAIFGSAILGGWGDRLGRKGAILVSDVFFTIGAVIIASSYSVPQIIVGRIILGIGVGGAAVIAPLFITETAPTAVRGRCIGVNAFFIPFGQVVSDAIGAGVQNMHNGWRLLFALGAVPSLLQLLLFHYLPESPRILILKGDTEGARTVFQRIYPTATSEMIEYKFRVAHEYIAATTALQSGTTFWERVKKVLKTGSYRRSIIAVSALQAAGQLTGFNTLLYYAGTLFGLLGLSNPALGGLIPAGTNAVFVLIGMSLVDKVGRRGLLLIGVPIMLLGHVWNIVSFYYMCKPTGGFLDTSYSYDTTDVGIVIGGIVFFVVGYGLTYSHLVWYQAEYLTLEVRSMGSGIATTVCWIANLVVSVSYLSELETMTPSGTYGFYFGISVIGFVFLVFCLPETKQLSIDETSLLFEDDWGVKRSAQMRKERRETRKRLQDAELGEAATAHLEARQQKSTSVSPAELSKFMAGLKGGKRTPSASV</sequence>
<evidence type="ECO:0000250" key="1">
    <source>
        <dbReference type="UniProtKB" id="P30605"/>
    </source>
</evidence>
<evidence type="ECO:0000255" key="2"/>
<evidence type="ECO:0000255" key="3">
    <source>
        <dbReference type="PROSITE-ProRule" id="PRU00498"/>
    </source>
</evidence>
<evidence type="ECO:0000256" key="4">
    <source>
        <dbReference type="SAM" id="MobiDB-lite"/>
    </source>
</evidence>
<evidence type="ECO:0000269" key="5">
    <source>
    </source>
</evidence>
<evidence type="ECO:0000269" key="6">
    <source>
    </source>
</evidence>
<evidence type="ECO:0000303" key="7">
    <source>
    </source>
</evidence>
<evidence type="ECO:0000305" key="8"/>
<evidence type="ECO:0000305" key="9">
    <source>
    </source>
</evidence>
<evidence type="ECO:0000305" key="10">
    <source>
    </source>
</evidence>
<evidence type="ECO:0000312" key="11">
    <source>
        <dbReference type="EMBL" id="AFR95263.2"/>
    </source>
</evidence>
<evidence type="ECO:0000312" key="12">
    <source>
        <dbReference type="Proteomes" id="UP000010091"/>
    </source>
</evidence>
<keyword id="KW-1003">Cell membrane</keyword>
<keyword id="KW-0325">Glycoprotein</keyword>
<keyword id="KW-0472">Membrane</keyword>
<keyword id="KW-0812">Transmembrane</keyword>
<keyword id="KW-1133">Transmembrane helix</keyword>
<keyword id="KW-0813">Transport</keyword>
<protein>
    <recommendedName>
        <fullName evidence="7">Myo-inositol transporter 3A</fullName>
    </recommendedName>
</protein>